<feature type="chain" id="PRO_1000134541" description="Acetyl-coenzyme A carboxylase carboxyl transferase subunit alpha">
    <location>
        <begin position="1"/>
        <end position="319"/>
    </location>
</feature>
<feature type="domain" description="CoA carboxyltransferase C-terminal" evidence="2">
    <location>
        <begin position="35"/>
        <end position="296"/>
    </location>
</feature>
<evidence type="ECO:0000255" key="1">
    <source>
        <dbReference type="HAMAP-Rule" id="MF_00823"/>
    </source>
</evidence>
<evidence type="ECO:0000255" key="2">
    <source>
        <dbReference type="PROSITE-ProRule" id="PRU01137"/>
    </source>
</evidence>
<gene>
    <name evidence="1" type="primary">accA</name>
    <name type="ordered locus">YpAngola_A3419</name>
</gene>
<name>ACCA_YERPG</name>
<accession>A9R380</accession>
<reference key="1">
    <citation type="journal article" date="2010" name="J. Bacteriol.">
        <title>Genome sequence of the deep-rooted Yersinia pestis strain Angola reveals new insights into the evolution and pangenome of the plague bacterium.</title>
        <authorList>
            <person name="Eppinger M."/>
            <person name="Worsham P.L."/>
            <person name="Nikolich M.P."/>
            <person name="Riley D.R."/>
            <person name="Sebastian Y."/>
            <person name="Mou S."/>
            <person name="Achtman M."/>
            <person name="Lindler L.E."/>
            <person name="Ravel J."/>
        </authorList>
    </citation>
    <scope>NUCLEOTIDE SEQUENCE [LARGE SCALE GENOMIC DNA]</scope>
    <source>
        <strain>Angola</strain>
    </source>
</reference>
<keyword id="KW-0067">ATP-binding</keyword>
<keyword id="KW-0963">Cytoplasm</keyword>
<keyword id="KW-0275">Fatty acid biosynthesis</keyword>
<keyword id="KW-0276">Fatty acid metabolism</keyword>
<keyword id="KW-0444">Lipid biosynthesis</keyword>
<keyword id="KW-0443">Lipid metabolism</keyword>
<keyword id="KW-0547">Nucleotide-binding</keyword>
<keyword id="KW-0808">Transferase</keyword>
<proteinExistence type="inferred from homology"/>
<organism>
    <name type="scientific">Yersinia pestis bv. Antiqua (strain Angola)</name>
    <dbReference type="NCBI Taxonomy" id="349746"/>
    <lineage>
        <taxon>Bacteria</taxon>
        <taxon>Pseudomonadati</taxon>
        <taxon>Pseudomonadota</taxon>
        <taxon>Gammaproteobacteria</taxon>
        <taxon>Enterobacterales</taxon>
        <taxon>Yersiniaceae</taxon>
        <taxon>Yersinia</taxon>
    </lineage>
</organism>
<comment type="function">
    <text evidence="1">Component of the acetyl coenzyme A carboxylase (ACC) complex. First, biotin carboxylase catalyzes the carboxylation of biotin on its carrier protein (BCCP) and then the CO(2) group is transferred by the carboxyltransferase to acetyl-CoA to form malonyl-CoA.</text>
</comment>
<comment type="catalytic activity">
    <reaction evidence="1">
        <text>N(6)-carboxybiotinyl-L-lysyl-[protein] + acetyl-CoA = N(6)-biotinyl-L-lysyl-[protein] + malonyl-CoA</text>
        <dbReference type="Rhea" id="RHEA:54728"/>
        <dbReference type="Rhea" id="RHEA-COMP:10505"/>
        <dbReference type="Rhea" id="RHEA-COMP:10506"/>
        <dbReference type="ChEBI" id="CHEBI:57288"/>
        <dbReference type="ChEBI" id="CHEBI:57384"/>
        <dbReference type="ChEBI" id="CHEBI:83144"/>
        <dbReference type="ChEBI" id="CHEBI:83145"/>
        <dbReference type="EC" id="2.1.3.15"/>
    </reaction>
</comment>
<comment type="pathway">
    <text evidence="1">Lipid metabolism; malonyl-CoA biosynthesis; malonyl-CoA from acetyl-CoA: step 1/1.</text>
</comment>
<comment type="subunit">
    <text evidence="1">Acetyl-CoA carboxylase is a heterohexamer composed of biotin carboxyl carrier protein (AccB), biotin carboxylase (AccC) and two subunits each of ACCase subunit alpha (AccA) and ACCase subunit beta (AccD).</text>
</comment>
<comment type="subcellular location">
    <subcellularLocation>
        <location evidence="1">Cytoplasm</location>
    </subcellularLocation>
</comment>
<comment type="similarity">
    <text evidence="1">Belongs to the AccA family.</text>
</comment>
<dbReference type="EC" id="2.1.3.15" evidence="1"/>
<dbReference type="EMBL" id="CP000901">
    <property type="protein sequence ID" value="ABX87997.1"/>
    <property type="molecule type" value="Genomic_DNA"/>
</dbReference>
<dbReference type="RefSeq" id="WP_002212147.1">
    <property type="nucleotide sequence ID" value="NZ_CP009935.1"/>
</dbReference>
<dbReference type="SMR" id="A9R380"/>
<dbReference type="GeneID" id="57977501"/>
<dbReference type="KEGG" id="ypg:YpAngola_A3419"/>
<dbReference type="PATRIC" id="fig|349746.12.peg.114"/>
<dbReference type="UniPathway" id="UPA00655">
    <property type="reaction ID" value="UER00711"/>
</dbReference>
<dbReference type="GO" id="GO:0009317">
    <property type="term" value="C:acetyl-CoA carboxylase complex"/>
    <property type="evidence" value="ECO:0007669"/>
    <property type="project" value="InterPro"/>
</dbReference>
<dbReference type="GO" id="GO:0003989">
    <property type="term" value="F:acetyl-CoA carboxylase activity"/>
    <property type="evidence" value="ECO:0007669"/>
    <property type="project" value="InterPro"/>
</dbReference>
<dbReference type="GO" id="GO:0005524">
    <property type="term" value="F:ATP binding"/>
    <property type="evidence" value="ECO:0007669"/>
    <property type="project" value="UniProtKB-KW"/>
</dbReference>
<dbReference type="GO" id="GO:0016743">
    <property type="term" value="F:carboxyl- or carbamoyltransferase activity"/>
    <property type="evidence" value="ECO:0007669"/>
    <property type="project" value="UniProtKB-UniRule"/>
</dbReference>
<dbReference type="GO" id="GO:0006633">
    <property type="term" value="P:fatty acid biosynthetic process"/>
    <property type="evidence" value="ECO:0007669"/>
    <property type="project" value="UniProtKB-KW"/>
</dbReference>
<dbReference type="GO" id="GO:2001295">
    <property type="term" value="P:malonyl-CoA biosynthetic process"/>
    <property type="evidence" value="ECO:0007669"/>
    <property type="project" value="UniProtKB-UniRule"/>
</dbReference>
<dbReference type="FunFam" id="3.90.226.10:FF:000008">
    <property type="entry name" value="Acetyl-coenzyme A carboxylase carboxyl transferase subunit alpha"/>
    <property type="match status" value="1"/>
</dbReference>
<dbReference type="Gene3D" id="3.90.226.10">
    <property type="entry name" value="2-enoyl-CoA Hydratase, Chain A, domain 1"/>
    <property type="match status" value="1"/>
</dbReference>
<dbReference type="HAMAP" id="MF_00823">
    <property type="entry name" value="AcetylCoA_CT_alpha"/>
    <property type="match status" value="1"/>
</dbReference>
<dbReference type="InterPro" id="IPR001095">
    <property type="entry name" value="Acetyl_CoA_COase_a_su"/>
</dbReference>
<dbReference type="InterPro" id="IPR029045">
    <property type="entry name" value="ClpP/crotonase-like_dom_sf"/>
</dbReference>
<dbReference type="InterPro" id="IPR011763">
    <property type="entry name" value="COA_CT_C"/>
</dbReference>
<dbReference type="NCBIfam" id="TIGR00513">
    <property type="entry name" value="accA"/>
    <property type="match status" value="1"/>
</dbReference>
<dbReference type="NCBIfam" id="NF041504">
    <property type="entry name" value="AccA_sub"/>
    <property type="match status" value="1"/>
</dbReference>
<dbReference type="NCBIfam" id="NF004344">
    <property type="entry name" value="PRK05724.1"/>
    <property type="match status" value="1"/>
</dbReference>
<dbReference type="PANTHER" id="PTHR42853">
    <property type="entry name" value="ACETYL-COENZYME A CARBOXYLASE CARBOXYL TRANSFERASE SUBUNIT ALPHA"/>
    <property type="match status" value="1"/>
</dbReference>
<dbReference type="PANTHER" id="PTHR42853:SF3">
    <property type="entry name" value="ACETYL-COENZYME A CARBOXYLASE CARBOXYL TRANSFERASE SUBUNIT ALPHA, CHLOROPLASTIC"/>
    <property type="match status" value="1"/>
</dbReference>
<dbReference type="Pfam" id="PF03255">
    <property type="entry name" value="ACCA"/>
    <property type="match status" value="1"/>
</dbReference>
<dbReference type="PRINTS" id="PR01069">
    <property type="entry name" value="ACCCTRFRASEA"/>
</dbReference>
<dbReference type="SUPFAM" id="SSF52096">
    <property type="entry name" value="ClpP/crotonase"/>
    <property type="match status" value="1"/>
</dbReference>
<dbReference type="PROSITE" id="PS50989">
    <property type="entry name" value="COA_CT_CTER"/>
    <property type="match status" value="1"/>
</dbReference>
<protein>
    <recommendedName>
        <fullName evidence="1">Acetyl-coenzyme A carboxylase carboxyl transferase subunit alpha</fullName>
        <shortName evidence="1">ACCase subunit alpha</shortName>
        <shortName evidence="1">Acetyl-CoA carboxylase carboxyltransferase subunit alpha</shortName>
        <ecNumber evidence="1">2.1.3.15</ecNumber>
    </recommendedName>
</protein>
<sequence length="319" mass="35496">MSLNFLDFEQPIAELEAKIDSLTAVSRQDEKLDINLDEEVQRLREKSVELTRKIFSDLGAWQIAQLARHPRRPYTLDYIANIFTDFEELAGDRAYADDKAIVGGIARLDGRPVMIIGHQKGRETKEKIRRNFGMPAPEGYRKALRLMEMAERFKLPIITFIDTPGAYPGVGAEERGQSEAIARNLREMSRLNVPIVCTVIGEGGSGGALAIGVGDKVNMLQYSTYSVISPEGCASILWKSADKAPLAAEAMGITAHRLKELKMIDSVIPEPLGGAHRDYAAIAISLKAQLLADLNDLDVLNDEELLNRRYQRLMNYGYC</sequence>